<sequence length="543" mass="60479">MSFRAVITSSEHQAVWSRLILTLSTINQDIKFTIMSNELILWSMNSTDTTMYQVRLKASFFSEFSFDPGNIVFGEEGLQVIEDLQKQQHTLYSFVINGRHLSILSRKPEYDNIKEFSLSIDNSTAAPEAIINRLHIRVYTESLITKEFSPAFNPVKYDPIVIDLKYKKKFLDVYGTEESVNGEQADPRLLDFFRQVRKQLEEAKFNEGIIDAPRPAELRSEHEINFLSMDSLIWRNAIDLCTNNTEELKLDLTMNKMVITAFTKGVQNMKSSDVLKQAISISNSVSTEDVEHYCLFTTSGNPGMSKKDADSKQAVFKLRDFRNFFSANQAWKENATVNCWFCSPGDPILFEIDRGHVKLSLVQITDTAGKAVGAAPDLAIHPVLVSPRKPVSPLRAACTNTNAASNALHGVQLDAANMDAIKTLFVQDVEIGVSAAAMAHSPANRCTDENLRSMCSISQQGQHSCDGSPATNLRRVSRAGTTIAWGAGKDHVMCPDSDYGVAQDVNQLKRRKVGELAHASQSPESQDYGLGPTQQYQPKGIFD</sequence>
<feature type="chain" id="PRO_0000239637" description="DNA damage checkpoint protein 1">
    <location>
        <begin position="1"/>
        <end position="543"/>
    </location>
</feature>
<feature type="region of interest" description="Disordered" evidence="2">
    <location>
        <begin position="512"/>
        <end position="543"/>
    </location>
</feature>
<gene>
    <name type="primary">DDC1</name>
    <name type="ordered locus">AFL075W</name>
</gene>
<proteinExistence type="inferred from homology"/>
<name>DDC1_EREGS</name>
<reference key="1">
    <citation type="journal article" date="2004" name="Science">
        <title>The Ashbya gossypii genome as a tool for mapping the ancient Saccharomyces cerevisiae genome.</title>
        <authorList>
            <person name="Dietrich F.S."/>
            <person name="Voegeli S."/>
            <person name="Brachat S."/>
            <person name="Lerch A."/>
            <person name="Gates K."/>
            <person name="Steiner S."/>
            <person name="Mohr C."/>
            <person name="Poehlmann R."/>
            <person name="Luedi P."/>
            <person name="Choi S."/>
            <person name="Wing R.A."/>
            <person name="Flavier A."/>
            <person name="Gaffney T.D."/>
            <person name="Philippsen P."/>
        </authorList>
    </citation>
    <scope>NUCLEOTIDE SEQUENCE [LARGE SCALE GENOMIC DNA]</scope>
    <source>
        <strain>ATCC 10895 / CBS 109.51 / FGSC 9923 / NRRL Y-1056</strain>
    </source>
</reference>
<reference key="2">
    <citation type="journal article" date="2013" name="G3 (Bethesda)">
        <title>Genomes of Ashbya fungi isolated from insects reveal four mating-type loci, numerous translocations, lack of transposons, and distinct gene duplications.</title>
        <authorList>
            <person name="Dietrich F.S."/>
            <person name="Voegeli S."/>
            <person name="Kuo S."/>
            <person name="Philippsen P."/>
        </authorList>
    </citation>
    <scope>GENOME REANNOTATION</scope>
    <source>
        <strain>ATCC 10895 / CBS 109.51 / FGSC 9923 / NRRL Y-1056</strain>
    </source>
</reference>
<accession>Q755A0</accession>
<organism>
    <name type="scientific">Eremothecium gossypii (strain ATCC 10895 / CBS 109.51 / FGSC 9923 / NRRL Y-1056)</name>
    <name type="common">Yeast</name>
    <name type="synonym">Ashbya gossypii</name>
    <dbReference type="NCBI Taxonomy" id="284811"/>
    <lineage>
        <taxon>Eukaryota</taxon>
        <taxon>Fungi</taxon>
        <taxon>Dikarya</taxon>
        <taxon>Ascomycota</taxon>
        <taxon>Saccharomycotina</taxon>
        <taxon>Saccharomycetes</taxon>
        <taxon>Saccharomycetales</taxon>
        <taxon>Saccharomycetaceae</taxon>
        <taxon>Eremothecium</taxon>
    </lineage>
</organism>
<comment type="function">
    <text evidence="1">Component of the checkpoint clamp complex involved in the surveillance mechanism that allows the DNA repair pathways to act to restore the integrity of the DNA prior to DNA synthesis or separation of the replicated chromosomes.</text>
</comment>
<comment type="subunit">
    <text evidence="1">Component of the checkpoint clamp complex composed of DDC1, MEC3 and RAD17.</text>
</comment>
<comment type="subcellular location">
    <subcellularLocation>
        <location evidence="1">Cytoplasm</location>
    </subcellularLocation>
    <subcellularLocation>
        <location evidence="1">Nucleus</location>
    </subcellularLocation>
</comment>
<comment type="similarity">
    <text evidence="3">Belongs to the DDC1 family.</text>
</comment>
<evidence type="ECO:0000250" key="1"/>
<evidence type="ECO:0000256" key="2">
    <source>
        <dbReference type="SAM" id="MobiDB-lite"/>
    </source>
</evidence>
<evidence type="ECO:0000305" key="3"/>
<protein>
    <recommendedName>
        <fullName>DNA damage checkpoint protein 1</fullName>
    </recommendedName>
</protein>
<dbReference type="EMBL" id="AE016819">
    <property type="protein sequence ID" value="AAS53297.1"/>
    <property type="molecule type" value="Genomic_DNA"/>
</dbReference>
<dbReference type="RefSeq" id="NP_985473.1">
    <property type="nucleotide sequence ID" value="NM_210827.1"/>
</dbReference>
<dbReference type="SMR" id="Q755A0"/>
<dbReference type="FunCoup" id="Q755A0">
    <property type="interactions" value="186"/>
</dbReference>
<dbReference type="STRING" id="284811.Q755A0"/>
<dbReference type="EnsemblFungi" id="AAS53297">
    <property type="protein sequence ID" value="AAS53297"/>
    <property type="gene ID" value="AGOS_AFL075W"/>
</dbReference>
<dbReference type="GeneID" id="4621702"/>
<dbReference type="KEGG" id="ago:AGOS_AFL075W"/>
<dbReference type="eggNOG" id="ENOG502QT39">
    <property type="taxonomic scope" value="Eukaryota"/>
</dbReference>
<dbReference type="HOGENOM" id="CLU_490204_0_0_1"/>
<dbReference type="InParanoid" id="Q755A0"/>
<dbReference type="OMA" id="EHYCLFT"/>
<dbReference type="OrthoDB" id="3992718at2759"/>
<dbReference type="Proteomes" id="UP000000591">
    <property type="component" value="Chromosome VI"/>
</dbReference>
<dbReference type="GO" id="GO:0030896">
    <property type="term" value="C:checkpoint clamp complex"/>
    <property type="evidence" value="ECO:0000318"/>
    <property type="project" value="GO_Central"/>
</dbReference>
<dbReference type="GO" id="GO:0005737">
    <property type="term" value="C:cytoplasm"/>
    <property type="evidence" value="ECO:0007669"/>
    <property type="project" value="UniProtKB-SubCell"/>
</dbReference>
<dbReference type="GO" id="GO:0003677">
    <property type="term" value="F:DNA binding"/>
    <property type="evidence" value="ECO:0007669"/>
    <property type="project" value="UniProtKB-KW"/>
</dbReference>
<dbReference type="GO" id="GO:0030295">
    <property type="term" value="F:protein kinase activator activity"/>
    <property type="evidence" value="ECO:0007669"/>
    <property type="project" value="EnsemblFungi"/>
</dbReference>
<dbReference type="GO" id="GO:0071479">
    <property type="term" value="P:cellular response to ionizing radiation"/>
    <property type="evidence" value="ECO:0000318"/>
    <property type="project" value="GO_Central"/>
</dbReference>
<dbReference type="GO" id="GO:0006281">
    <property type="term" value="P:DNA repair"/>
    <property type="evidence" value="ECO:0000318"/>
    <property type="project" value="GO_Central"/>
</dbReference>
<dbReference type="GO" id="GO:0000076">
    <property type="term" value="P:DNA replication checkpoint signaling"/>
    <property type="evidence" value="ECO:0000318"/>
    <property type="project" value="GO_Central"/>
</dbReference>
<dbReference type="GO" id="GO:0051598">
    <property type="term" value="P:meiotic recombination checkpoint signaling"/>
    <property type="evidence" value="ECO:0007669"/>
    <property type="project" value="EnsemblFungi"/>
</dbReference>
<dbReference type="GO" id="GO:0031571">
    <property type="term" value="P:mitotic G1 DNA damage checkpoint signaling"/>
    <property type="evidence" value="ECO:0007669"/>
    <property type="project" value="EnsemblFungi"/>
</dbReference>
<dbReference type="GO" id="GO:0007095">
    <property type="term" value="P:mitotic G2 DNA damage checkpoint signaling"/>
    <property type="evidence" value="ECO:0007669"/>
    <property type="project" value="EnsemblFungi"/>
</dbReference>
<dbReference type="GO" id="GO:0031573">
    <property type="term" value="P:mitotic intra-S DNA damage checkpoint signaling"/>
    <property type="evidence" value="ECO:0000318"/>
    <property type="project" value="GO_Central"/>
</dbReference>
<dbReference type="GO" id="GO:0000725">
    <property type="term" value="P:recombinational repair"/>
    <property type="evidence" value="ECO:0007669"/>
    <property type="project" value="EnsemblFungi"/>
</dbReference>
<dbReference type="FunFam" id="3.70.10.10:FF:000021">
    <property type="entry name" value="DNA damage checkpoint"/>
    <property type="match status" value="1"/>
</dbReference>
<dbReference type="FunFam" id="3.70.10.10:FF:000095">
    <property type="entry name" value="DNA damage checkpoint protein 1"/>
    <property type="match status" value="1"/>
</dbReference>
<dbReference type="Gene3D" id="3.70.10.10">
    <property type="match status" value="2"/>
</dbReference>
<dbReference type="InterPro" id="IPR026217">
    <property type="entry name" value="Ddc1"/>
</dbReference>
<dbReference type="InterPro" id="IPR046938">
    <property type="entry name" value="DNA_clamp_sf"/>
</dbReference>
<dbReference type="InterPro" id="IPR007268">
    <property type="entry name" value="Rad9/Ddc1"/>
</dbReference>
<dbReference type="PANTHER" id="PTHR15237:SF0">
    <property type="entry name" value="CELL CYCLE CHECKPOINT CONTROL PROTEIN"/>
    <property type="match status" value="1"/>
</dbReference>
<dbReference type="PANTHER" id="PTHR15237">
    <property type="entry name" value="DNA REPAIR PROTEIN RAD9"/>
    <property type="match status" value="1"/>
</dbReference>
<dbReference type="PRINTS" id="PR02063">
    <property type="entry name" value="DNADAMAGECP1"/>
</dbReference>
<dbReference type="SUPFAM" id="SSF55979">
    <property type="entry name" value="DNA clamp"/>
    <property type="match status" value="1"/>
</dbReference>
<keyword id="KW-0963">Cytoplasm</keyword>
<keyword id="KW-0227">DNA damage</keyword>
<keyword id="KW-0234">DNA repair</keyword>
<keyword id="KW-0238">DNA-binding</keyword>
<keyword id="KW-0539">Nucleus</keyword>
<keyword id="KW-1185">Reference proteome</keyword>